<proteinExistence type="inferred from homology"/>
<name>EXO5_CANAL</name>
<keyword id="KW-0004">4Fe-4S</keyword>
<keyword id="KW-0238">DNA-binding</keyword>
<keyword id="KW-0269">Exonuclease</keyword>
<keyword id="KW-0378">Hydrolase</keyword>
<keyword id="KW-0408">Iron</keyword>
<keyword id="KW-0411">Iron-sulfur</keyword>
<keyword id="KW-0460">Magnesium</keyword>
<keyword id="KW-0479">Metal-binding</keyword>
<keyword id="KW-0496">Mitochondrion</keyword>
<keyword id="KW-0540">Nuclease</keyword>
<keyword id="KW-1185">Reference proteome</keyword>
<keyword id="KW-0809">Transit peptide</keyword>
<evidence type="ECO:0000250" key="1"/>
<evidence type="ECO:0000255" key="2"/>
<evidence type="ECO:0000256" key="3">
    <source>
        <dbReference type="SAM" id="MobiDB-lite"/>
    </source>
</evidence>
<evidence type="ECO:0000305" key="4"/>
<sequence length="628" mass="72427">MSRFWHFKKFYFTSCYSMQRMRGKIFKNEPLVPMNVTSEHEQVQSISKEESRSLSSNDLNLSADSELQLESEPEIESEQLKNHEDVYEIIRSMVLAADTTLPRLSNNSLTGIYNHWKLNPNDDLPLYNPTKYTPYEFHSQYNQDRSYIITPRLSVTKLLVSSWCELRSFYQVYSGSVRLPSTKAMTQGTKLHSKLEAEVHPEIDTTEIEQFLISNAMSLRELQTTVPAEEETVVIDLGEVEQLAVDWAEMLIERLFSLIMGAEAREILLHGYLNLKNRSFVTNKDEIRESSSVLVSGIVDYIKLQNVTNPSDGTLFDDIHGFVDSAFDQVDNVPLVDLSQFLPEAKQILQNYDFRLTFTDVKTRSARQIPRQESVLEAAKFQTFYYRHFFHLLSRDSRFTYFSLIENAERRGHDVDKPLSILTTISLLRKHYHIFFKDFVKLANGEPIGFSPFDDSAKSIPYDFVSMFQSSDEFSLANPNHNHFLEQISAIDGIEYDSILSPLLKVWKTPPTLRYLAARASQLFNVFNENIGDITSVEYRYNKTSELLSEKVYDYNFSEFQAEVESASKFWNGEREVIPTEDLSRCSYCEFQSKCMVAGGKTTEAVEKKTIGPKIRQFLNECESSSKG</sequence>
<accession>Q59ZZ6</accession>
<accession>A0A1D8PSI4</accession>
<reference key="1">
    <citation type="journal article" date="2004" name="Proc. Natl. Acad. Sci. U.S.A.">
        <title>The diploid genome sequence of Candida albicans.</title>
        <authorList>
            <person name="Jones T."/>
            <person name="Federspiel N.A."/>
            <person name="Chibana H."/>
            <person name="Dungan J."/>
            <person name="Kalman S."/>
            <person name="Magee B.B."/>
            <person name="Newport G."/>
            <person name="Thorstenson Y.R."/>
            <person name="Agabian N."/>
            <person name="Magee P.T."/>
            <person name="Davis R.W."/>
            <person name="Scherer S."/>
        </authorList>
    </citation>
    <scope>NUCLEOTIDE SEQUENCE [LARGE SCALE GENOMIC DNA]</scope>
    <source>
        <strain>SC5314 / ATCC MYA-2876</strain>
    </source>
</reference>
<reference key="2">
    <citation type="journal article" date="2007" name="Genome Biol.">
        <title>Assembly of the Candida albicans genome into sixteen supercontigs aligned on the eight chromosomes.</title>
        <authorList>
            <person name="van het Hoog M."/>
            <person name="Rast T.J."/>
            <person name="Martchenko M."/>
            <person name="Grindle S."/>
            <person name="Dignard D."/>
            <person name="Hogues H."/>
            <person name="Cuomo C."/>
            <person name="Berriman M."/>
            <person name="Scherer S."/>
            <person name="Magee B.B."/>
            <person name="Whiteway M."/>
            <person name="Chibana H."/>
            <person name="Nantel A."/>
            <person name="Magee P.T."/>
        </authorList>
    </citation>
    <scope>GENOME REANNOTATION</scope>
    <source>
        <strain>SC5314 / ATCC MYA-2876</strain>
    </source>
</reference>
<reference key="3">
    <citation type="journal article" date="2013" name="Genome Biol.">
        <title>Assembly of a phased diploid Candida albicans genome facilitates allele-specific measurements and provides a simple model for repeat and indel structure.</title>
        <authorList>
            <person name="Muzzey D."/>
            <person name="Schwartz K."/>
            <person name="Weissman J.S."/>
            <person name="Sherlock G."/>
        </authorList>
    </citation>
    <scope>NUCLEOTIDE SEQUENCE [LARGE SCALE GENOMIC DNA]</scope>
    <scope>GENOME REANNOTATION</scope>
    <source>
        <strain>SC5314 / ATCC MYA-2876</strain>
    </source>
</reference>
<comment type="function">
    <text evidence="1">Single strand DNA specific 5' exonuclease involved in mitochondrial DNA replication and recombination. Releases dinucleotides as main products of catalysis. Has the capacity to slide across 5'double-stranded DNA or 5'RNA sequences and resumes cutting two nucleotides downstream of the double-stranded-to-single-stranded junction or RNA-to-DNA junction, respectively (By similarity).</text>
</comment>
<comment type="cofactor">
    <cofactor evidence="1">
        <name>Mg(2+)</name>
        <dbReference type="ChEBI" id="CHEBI:18420"/>
    </cofactor>
</comment>
<comment type="cofactor">
    <cofactor evidence="1">
        <name>[4Fe-4S] cluster</name>
        <dbReference type="ChEBI" id="CHEBI:49883"/>
    </cofactor>
    <text evidence="1">Binds 1 [4Fe-4S] cluster.</text>
</comment>
<comment type="subunit">
    <text evidence="1">Monomer.</text>
</comment>
<comment type="subcellular location">
    <subcellularLocation>
        <location>Mitochondrion</location>
    </subcellularLocation>
</comment>
<comment type="similarity">
    <text evidence="4">Belongs to the EXO5 family.</text>
</comment>
<comment type="sequence caution" evidence="4">
    <conflict type="erroneous initiation">
        <sequence resource="EMBL-CDS" id="AOW31087"/>
    </conflict>
    <text>Truncated N-terminus.</text>
</comment>
<protein>
    <recommendedName>
        <fullName>Exonuclease V, mitochondrial</fullName>
        <shortName>Exo V</shortName>
        <ecNumber>3.1.-.-</ecNumber>
    </recommendedName>
    <alternativeName>
        <fullName>Defects in morphology protein 1</fullName>
    </alternativeName>
</protein>
<dbReference type="EC" id="3.1.-.-"/>
<dbReference type="EMBL" id="CP017630">
    <property type="protein sequence ID" value="AOW31087.1"/>
    <property type="status" value="ALT_INIT"/>
    <property type="molecule type" value="Genomic_DNA"/>
</dbReference>
<dbReference type="RefSeq" id="XP_715168.2">
    <property type="nucleotide sequence ID" value="XM_710075.2"/>
</dbReference>
<dbReference type="FunCoup" id="Q59ZZ6">
    <property type="interactions" value="22"/>
</dbReference>
<dbReference type="STRING" id="237561.Q59ZZ6"/>
<dbReference type="GeneID" id="3643200"/>
<dbReference type="KEGG" id="cal:CAALFM_CR03490WA"/>
<dbReference type="eggNOG" id="ENOG502QR0P">
    <property type="taxonomic scope" value="Eukaryota"/>
</dbReference>
<dbReference type="HOGENOM" id="CLU_019985_0_0_1"/>
<dbReference type="InParanoid" id="Q59ZZ6"/>
<dbReference type="OrthoDB" id="354769at2759"/>
<dbReference type="PRO" id="PR:Q59ZZ6"/>
<dbReference type="Proteomes" id="UP000000559">
    <property type="component" value="Chromosome R"/>
</dbReference>
<dbReference type="GO" id="GO:0005739">
    <property type="term" value="C:mitochondrion"/>
    <property type="evidence" value="ECO:0000318"/>
    <property type="project" value="GO_Central"/>
</dbReference>
<dbReference type="GO" id="GO:0005634">
    <property type="term" value="C:nucleus"/>
    <property type="evidence" value="ECO:0000318"/>
    <property type="project" value="GO_Central"/>
</dbReference>
<dbReference type="GO" id="GO:0051539">
    <property type="term" value="F:4 iron, 4 sulfur cluster binding"/>
    <property type="evidence" value="ECO:0007669"/>
    <property type="project" value="UniProtKB-KW"/>
</dbReference>
<dbReference type="GO" id="GO:0003677">
    <property type="term" value="F:DNA binding"/>
    <property type="evidence" value="ECO:0007669"/>
    <property type="project" value="UniProtKB-KW"/>
</dbReference>
<dbReference type="GO" id="GO:0046872">
    <property type="term" value="F:metal ion binding"/>
    <property type="evidence" value="ECO:0007669"/>
    <property type="project" value="UniProtKB-KW"/>
</dbReference>
<dbReference type="GO" id="GO:0045145">
    <property type="term" value="F:single-stranded DNA 5'-3' DNA exonuclease activity"/>
    <property type="evidence" value="ECO:0000318"/>
    <property type="project" value="GO_Central"/>
</dbReference>
<dbReference type="GO" id="GO:0036297">
    <property type="term" value="P:interstrand cross-link repair"/>
    <property type="evidence" value="ECO:0000318"/>
    <property type="project" value="GO_Central"/>
</dbReference>
<dbReference type="InterPro" id="IPR019190">
    <property type="entry name" value="EXOV"/>
</dbReference>
<dbReference type="PANTHER" id="PTHR14464">
    <property type="entry name" value="EXONUCLEASE V"/>
    <property type="match status" value="1"/>
</dbReference>
<dbReference type="PANTHER" id="PTHR14464:SF4">
    <property type="entry name" value="EXONUCLEASE V"/>
    <property type="match status" value="1"/>
</dbReference>
<dbReference type="Pfam" id="PF09810">
    <property type="entry name" value="Exo5"/>
    <property type="match status" value="1"/>
</dbReference>
<organism>
    <name type="scientific">Candida albicans (strain SC5314 / ATCC MYA-2876)</name>
    <name type="common">Yeast</name>
    <dbReference type="NCBI Taxonomy" id="237561"/>
    <lineage>
        <taxon>Eukaryota</taxon>
        <taxon>Fungi</taxon>
        <taxon>Dikarya</taxon>
        <taxon>Ascomycota</taxon>
        <taxon>Saccharomycotina</taxon>
        <taxon>Pichiomycetes</taxon>
        <taxon>Debaryomycetaceae</taxon>
        <taxon>Candida/Lodderomyces clade</taxon>
        <taxon>Candida</taxon>
    </lineage>
</organism>
<gene>
    <name type="primary">DEM1</name>
    <name type="synonym">EXO5</name>
    <name type="ordered locus">CAALFM_CR03490WA</name>
    <name type="ORF">CaO19.11870</name>
    <name type="ORF">CaO19.4392</name>
</gene>
<feature type="transit peptide" description="Mitochondrion" evidence="2">
    <location>
        <begin position="1"/>
        <end position="21"/>
    </location>
</feature>
<feature type="chain" id="PRO_0000285321" description="Exonuclease V, mitochondrial">
    <location>
        <begin position="22"/>
        <end position="628"/>
    </location>
</feature>
<feature type="region of interest" description="Disordered" evidence="3">
    <location>
        <begin position="37"/>
        <end position="58"/>
    </location>
</feature>
<feature type="compositionally biased region" description="Basic and acidic residues" evidence="3">
    <location>
        <begin position="38"/>
        <end position="52"/>
    </location>
</feature>
<feature type="binding site" evidence="1">
    <location>
        <position position="164"/>
    </location>
    <ligand>
        <name>[4Fe-4S] cluster</name>
        <dbReference type="ChEBI" id="CHEBI:49883"/>
    </ligand>
</feature>
<feature type="binding site" evidence="1">
    <location>
        <position position="586"/>
    </location>
    <ligand>
        <name>[4Fe-4S] cluster</name>
        <dbReference type="ChEBI" id="CHEBI:49883"/>
    </ligand>
</feature>
<feature type="binding site" evidence="1">
    <location>
        <position position="589"/>
    </location>
    <ligand>
        <name>[4Fe-4S] cluster</name>
        <dbReference type="ChEBI" id="CHEBI:49883"/>
    </ligand>
</feature>
<feature type="binding site" evidence="1">
    <location>
        <position position="595"/>
    </location>
    <ligand>
        <name>[4Fe-4S] cluster</name>
        <dbReference type="ChEBI" id="CHEBI:49883"/>
    </ligand>
</feature>